<name>AB39G_ARATH</name>
<reference key="1">
    <citation type="journal article" date="2000" name="Nature">
        <title>Sequence and analysis of chromosome 1 of the plant Arabidopsis thaliana.</title>
        <authorList>
            <person name="Theologis A."/>
            <person name="Ecker J.R."/>
            <person name="Palm C.J."/>
            <person name="Federspiel N.A."/>
            <person name="Kaul S."/>
            <person name="White O."/>
            <person name="Alonso J."/>
            <person name="Altafi H."/>
            <person name="Araujo R."/>
            <person name="Bowman C.L."/>
            <person name="Brooks S.Y."/>
            <person name="Buehler E."/>
            <person name="Chan A."/>
            <person name="Chao Q."/>
            <person name="Chen H."/>
            <person name="Cheuk R.F."/>
            <person name="Chin C.W."/>
            <person name="Chung M.K."/>
            <person name="Conn L."/>
            <person name="Conway A.B."/>
            <person name="Conway A.R."/>
            <person name="Creasy T.H."/>
            <person name="Dewar K."/>
            <person name="Dunn P."/>
            <person name="Etgu P."/>
            <person name="Feldblyum T.V."/>
            <person name="Feng J.-D."/>
            <person name="Fong B."/>
            <person name="Fujii C.Y."/>
            <person name="Gill J.E."/>
            <person name="Goldsmith A.D."/>
            <person name="Haas B."/>
            <person name="Hansen N.F."/>
            <person name="Hughes B."/>
            <person name="Huizar L."/>
            <person name="Hunter J.L."/>
            <person name="Jenkins J."/>
            <person name="Johnson-Hopson C."/>
            <person name="Khan S."/>
            <person name="Khaykin E."/>
            <person name="Kim C.J."/>
            <person name="Koo H.L."/>
            <person name="Kremenetskaia I."/>
            <person name="Kurtz D.B."/>
            <person name="Kwan A."/>
            <person name="Lam B."/>
            <person name="Langin-Hooper S."/>
            <person name="Lee A."/>
            <person name="Lee J.M."/>
            <person name="Lenz C.A."/>
            <person name="Li J.H."/>
            <person name="Li Y.-P."/>
            <person name="Lin X."/>
            <person name="Liu S.X."/>
            <person name="Liu Z.A."/>
            <person name="Luros J.S."/>
            <person name="Maiti R."/>
            <person name="Marziali A."/>
            <person name="Militscher J."/>
            <person name="Miranda M."/>
            <person name="Nguyen M."/>
            <person name="Nierman W.C."/>
            <person name="Osborne B.I."/>
            <person name="Pai G."/>
            <person name="Peterson J."/>
            <person name="Pham P.K."/>
            <person name="Rizzo M."/>
            <person name="Rooney T."/>
            <person name="Rowley D."/>
            <person name="Sakano H."/>
            <person name="Salzberg S.L."/>
            <person name="Schwartz J.R."/>
            <person name="Shinn P."/>
            <person name="Southwick A.M."/>
            <person name="Sun H."/>
            <person name="Tallon L.J."/>
            <person name="Tambunga G."/>
            <person name="Toriumi M.J."/>
            <person name="Town C.D."/>
            <person name="Utterback T."/>
            <person name="Van Aken S."/>
            <person name="Vaysberg M."/>
            <person name="Vysotskaia V.S."/>
            <person name="Walker M."/>
            <person name="Wu D."/>
            <person name="Yu G."/>
            <person name="Fraser C.M."/>
            <person name="Venter J.C."/>
            <person name="Davis R.W."/>
        </authorList>
    </citation>
    <scope>NUCLEOTIDE SEQUENCE [LARGE SCALE GENOMIC DNA]</scope>
    <source>
        <strain>cv. Columbia</strain>
    </source>
</reference>
<reference key="2">
    <citation type="journal article" date="2017" name="Plant J.">
        <title>Araport11: a complete reannotation of the Arabidopsis thaliana reference genome.</title>
        <authorList>
            <person name="Cheng C.Y."/>
            <person name="Krishnakumar V."/>
            <person name="Chan A.P."/>
            <person name="Thibaud-Nissen F."/>
            <person name="Schobel S."/>
            <person name="Town C.D."/>
        </authorList>
    </citation>
    <scope>GENOME REANNOTATION</scope>
    <source>
        <strain>cv. Columbia</strain>
    </source>
</reference>
<reference key="3">
    <citation type="journal article" date="2002" name="Planta">
        <title>The plant PDR family of ABC transporters.</title>
        <authorList>
            <person name="van den Brule S."/>
            <person name="Smart C.C."/>
        </authorList>
    </citation>
    <scope>IDENTIFICATION</scope>
</reference>
<reference key="4">
    <citation type="journal article" date="2006" name="FEBS Lett.">
        <title>Organization and function of the plant pleiotropic drug resistance ABC transporter family.</title>
        <authorList>
            <person name="Crouzet J."/>
            <person name="Trombik T."/>
            <person name="Fraysse A.S."/>
            <person name="Boutry M."/>
        </authorList>
    </citation>
    <scope>GENE FAMILY</scope>
    <scope>NOMENCLATURE</scope>
</reference>
<reference key="5">
    <citation type="journal article" date="2008" name="Trends Plant Sci.">
        <title>Plant ABC proteins - a unified nomenclature and updated inventory.</title>
        <authorList>
            <person name="Verrier P.J."/>
            <person name="Bird D."/>
            <person name="Burla B."/>
            <person name="Dassa E."/>
            <person name="Forestier C."/>
            <person name="Geisler M."/>
            <person name="Klein M."/>
            <person name="Kolukisaoglu H.U."/>
            <person name="Lee Y."/>
            <person name="Martinoia E."/>
            <person name="Murphy A."/>
            <person name="Rea P.A."/>
            <person name="Samuels L."/>
            <person name="Schulz B."/>
            <person name="Spalding E.J."/>
            <person name="Yazaki K."/>
            <person name="Theodoulou F.L."/>
        </authorList>
    </citation>
    <scope>GENE FAMILY</scope>
    <scope>NOMENCLATURE</scope>
</reference>
<organism>
    <name type="scientific">Arabidopsis thaliana</name>
    <name type="common">Mouse-ear cress</name>
    <dbReference type="NCBI Taxonomy" id="3702"/>
    <lineage>
        <taxon>Eukaryota</taxon>
        <taxon>Viridiplantae</taxon>
        <taxon>Streptophyta</taxon>
        <taxon>Embryophyta</taxon>
        <taxon>Tracheophyta</taxon>
        <taxon>Spermatophyta</taxon>
        <taxon>Magnoliopsida</taxon>
        <taxon>eudicotyledons</taxon>
        <taxon>Gunneridae</taxon>
        <taxon>Pentapetalae</taxon>
        <taxon>rosids</taxon>
        <taxon>malvids</taxon>
        <taxon>Brassicales</taxon>
        <taxon>Brassicaceae</taxon>
        <taxon>Camelineae</taxon>
        <taxon>Arabidopsis</taxon>
    </lineage>
</organism>
<gene>
    <name type="primary">ABCG39</name>
    <name type="synonym">PDR11</name>
    <name type="synonym">PDR13</name>
    <name type="ordered locus">At1g66950</name>
    <name type="ORF">F1O19.3</name>
    <name type="ORF">T4O24.9</name>
</gene>
<keyword id="KW-0067">ATP-binding</keyword>
<keyword id="KW-0472">Membrane</keyword>
<keyword id="KW-0547">Nucleotide-binding</keyword>
<keyword id="KW-1185">Reference proteome</keyword>
<keyword id="KW-0677">Repeat</keyword>
<keyword id="KW-0812">Transmembrane</keyword>
<keyword id="KW-1133">Transmembrane helix</keyword>
<keyword id="KW-0813">Transport</keyword>
<accession>Q7PC84</accession>
<accession>Q9C623</accession>
<accession>Q9FZI3</accession>
<sequence length="1454" mass="165193">MAAMLGRDEDPVGALSGRVSLASTSHRSLVGASKSFRDVFMPQTDEVFGRSERREEDDMELRWAAIERLPTFDRLRKGMLPQTSANGKIELEDIDLTRLEPKDKKHLMEMILSFVEEDNEKFLRDLRERTDRVGIEVPKIEVRYENISVEGDVRSASRALPTLFNVTLNTLESILGFFHLLPSKRKKIQILKDISGIVKPSRMTLLLGPPSSGKTTLLQALAGKLDDTLQMSGRITYCGHEFREFVPQKTCAYISQHDLHFGEMTVREILDFSGRCLGVGSRYQLMSELSRREKEEGIKPDPKIDAFMKSIAISGQETSLVTDYVLKILGLDICADILAGDVMRRGISGGQKKRLTTGEMLVGPARALFMDEISTGLDSSTTFQICKFMRQLVHISDVTMIISLLQPAPETFELFDDIILLSEGQIVYQGPRDNVLEFFEYFGFQCPERKGVADFLQEVTSKKDQEQYWNKREQPYNYVSVSDFSSGFSTFHTGQKLTSEFRVPYDKAKTHSAALVTQKYGISNWELFKACFDREWLLMKRNSFVYVFKTVQITIMSLITMTVYLRTEMHVGTVRDGQKFYGAMFFSLINVMFNGLAELAFTVMRLPVFYKQRDFLFYPPWAFALPAWLLKIPLSLIESGIWIGLTYYTIGFAPSAARFFRQLLAYFCVNQMALSLFRFLGAIGRTEVISNSIGTFTLLIVFTLGGFIIAKDDIRPWMTWAYYMSPMMYGQTAIVMNEFLDERWSSPNYDTRINAKTVGEVLLKSRGFFTEPYWFWICIVALLGFSLLFNLFYILALMYLNPLGNSKATVVEEGKDKQKGENRGTEGSVVELNSSSNKGPKRGMVLPFQPLSLAFNNVNYYVDMPSEMKAQGVEGDRLQLLRDVGGAFRPGILTALVGVSGAGKTTLMDVLAGRKTGGYIEGSISISGYPKNQTTFARVSGYCEQNDIHSPHVTVYESLIYSAWLRLSTDIDIKTRELFVEEVMELVELKPLRNSIVGLPGVDGLSTEQRKRLTIAVELVANPSIIFMDEPTSGLDARAAAIVMRTVRNTVDTGRTVVCTIHQPSIDIFESFDELLLMKRGGQVIYAGSLGHHSQKLVEYFEAVEGVPKINDGYNPATWMLDVTTPSMESQMSLDFAQIFSNSSLYRRNQELIKDLSTPPPGSKDVYFKTKYAQSFSTQTKACFWKQYWSYWRHPQYNAIRFLMTVVIGVLFGLIFWQIGTKTENEQDLNNFFGAMYAAVLFLGALNAATVQPAIAIERTVFYREKAAGMYSAIPYAISQVAVEIMYNTIQTGVYTLILYSMIGCNWTMAKFLWFYYYMLTSFIYFTLYGMMLMALTPNYQIAGICMSFFLSLWNLFSGFLIPRPQIPIWWRWYYWATPVAWTLYGLITSQVGDKDSMVHISGIGDIDLKTLLKEGFGFEHDFLPVVAVVHIAWILLFLFVFAYGIKFLNFQRR</sequence>
<feature type="chain" id="PRO_0000234638" description="ABC transporter G family member 39">
    <location>
        <begin position="1"/>
        <end position="1454"/>
    </location>
</feature>
<feature type="transmembrane region" description="Helical" evidence="2">
    <location>
        <begin position="544"/>
        <end position="564"/>
    </location>
</feature>
<feature type="transmembrane region" description="Helical" evidence="2">
    <location>
        <begin position="584"/>
        <end position="604"/>
    </location>
</feature>
<feature type="transmembrane region" description="Helical" evidence="2">
    <location>
        <begin position="623"/>
        <end position="643"/>
    </location>
</feature>
<feature type="transmembrane region" description="Helical" evidence="2">
    <location>
        <begin position="663"/>
        <end position="683"/>
    </location>
</feature>
<feature type="transmembrane region" description="Helical" evidence="2">
    <location>
        <begin position="689"/>
        <end position="709"/>
    </location>
</feature>
<feature type="transmembrane region" description="Helical" evidence="2">
    <location>
        <begin position="716"/>
        <end position="736"/>
    </location>
</feature>
<feature type="transmembrane region" description="Helical" evidence="2">
    <location>
        <begin position="775"/>
        <end position="795"/>
    </location>
</feature>
<feature type="transmembrane region" description="Helical" evidence="2">
    <location>
        <begin position="1199"/>
        <end position="1219"/>
    </location>
</feature>
<feature type="transmembrane region" description="Helical" evidence="2">
    <location>
        <begin position="1231"/>
        <end position="1251"/>
    </location>
</feature>
<feature type="transmembrane region" description="Helical" evidence="5">
    <location>
        <begin position="1285"/>
        <end position="1303"/>
    </location>
</feature>
<feature type="transmembrane region" description="Helical" evidence="2">
    <location>
        <begin position="1312"/>
        <end position="1332"/>
    </location>
</feature>
<feature type="transmembrane region" description="Helical" evidence="2">
    <location>
        <begin position="1342"/>
        <end position="1362"/>
    </location>
</feature>
<feature type="transmembrane region" description="Helical" evidence="2">
    <location>
        <begin position="1367"/>
        <end position="1387"/>
    </location>
</feature>
<feature type="transmembrane region" description="Helical" evidence="2">
    <location>
        <begin position="1423"/>
        <end position="1443"/>
    </location>
</feature>
<feature type="domain" description="ABC transporter 1" evidence="3">
    <location>
        <begin position="175"/>
        <end position="448"/>
    </location>
</feature>
<feature type="domain" description="ABC transmembrane type-2 1" evidence="5">
    <location>
        <begin position="526"/>
        <end position="739"/>
    </location>
</feature>
<feature type="domain" description="ABC transporter 2" evidence="3">
    <location>
        <begin position="853"/>
        <end position="1106"/>
    </location>
</feature>
<feature type="domain" description="ABC transmembrane type-2 2" evidence="5">
    <location>
        <begin position="1178"/>
        <end position="1392"/>
    </location>
</feature>
<feature type="region of interest" description="Disordered" evidence="4">
    <location>
        <begin position="812"/>
        <end position="838"/>
    </location>
</feature>
<feature type="compositionally biased region" description="Basic and acidic residues" evidence="4">
    <location>
        <begin position="812"/>
        <end position="824"/>
    </location>
</feature>
<feature type="binding site" evidence="3">
    <location>
        <begin position="208"/>
        <end position="215"/>
    </location>
    <ligand>
        <name>ATP</name>
        <dbReference type="ChEBI" id="CHEBI:30616"/>
        <label>1</label>
    </ligand>
</feature>
<feature type="binding site" evidence="3">
    <location>
        <begin position="898"/>
        <end position="905"/>
    </location>
    <ligand>
        <name>ATP</name>
        <dbReference type="ChEBI" id="CHEBI:30616"/>
        <label>2</label>
    </ligand>
</feature>
<comment type="function">
    <text evidence="1">May be a general defense protein.</text>
</comment>
<comment type="subcellular location">
    <subcellularLocation>
        <location evidence="1">Membrane</location>
        <topology evidence="1">Multi-pass membrane protein</topology>
    </subcellularLocation>
</comment>
<comment type="similarity">
    <text evidence="5">Belongs to the ABC transporter superfamily. ABCG family. PDR (TC 3.A.1.205) subfamily.</text>
</comment>
<comment type="sequence caution" evidence="5">
    <conflict type="erroneous gene model prediction">
        <sequence resource="EMBL-CDS" id="AAF98206"/>
    </conflict>
</comment>
<comment type="sequence caution" evidence="5">
    <conflict type="erroneous gene model prediction">
        <sequence resource="EMBL-CDS" id="AAG50592"/>
    </conflict>
</comment>
<dbReference type="EMBL" id="AC007152">
    <property type="protein sequence ID" value="AAF98206.1"/>
    <property type="status" value="ALT_SEQ"/>
    <property type="molecule type" value="Genomic_DNA"/>
</dbReference>
<dbReference type="EMBL" id="AC083891">
    <property type="protein sequence ID" value="AAG50592.1"/>
    <property type="status" value="ALT_SEQ"/>
    <property type="molecule type" value="Genomic_DNA"/>
</dbReference>
<dbReference type="EMBL" id="CP002684">
    <property type="protein sequence ID" value="AEE34577.1"/>
    <property type="molecule type" value="Genomic_DNA"/>
</dbReference>
<dbReference type="EMBL" id="BK001010">
    <property type="protein sequence ID" value="DAA00879.1"/>
    <property type="molecule type" value="Genomic_DNA"/>
</dbReference>
<dbReference type="PIR" id="D96693">
    <property type="entry name" value="D96693"/>
</dbReference>
<dbReference type="RefSeq" id="NP_176867.2">
    <property type="nucleotide sequence ID" value="NM_105366.4"/>
</dbReference>
<dbReference type="SMR" id="Q7PC84"/>
<dbReference type="BioGRID" id="28234">
    <property type="interactions" value="1"/>
</dbReference>
<dbReference type="FunCoup" id="Q7PC84">
    <property type="interactions" value="322"/>
</dbReference>
<dbReference type="STRING" id="3702.Q7PC84"/>
<dbReference type="TCDB" id="3.A.1.205.22">
    <property type="family name" value="the atp-binding cassette (abc) superfamily"/>
</dbReference>
<dbReference type="PaxDb" id="3702-AT1G66950.1"/>
<dbReference type="ProteomicsDB" id="244619"/>
<dbReference type="EnsemblPlants" id="AT1G66950.1">
    <property type="protein sequence ID" value="AT1G66950.1"/>
    <property type="gene ID" value="AT1G66950"/>
</dbReference>
<dbReference type="GeneID" id="843013"/>
<dbReference type="Gramene" id="AT1G66950.1">
    <property type="protein sequence ID" value="AT1G66950.1"/>
    <property type="gene ID" value="AT1G66950"/>
</dbReference>
<dbReference type="KEGG" id="ath:AT1G66950"/>
<dbReference type="Araport" id="AT1G66950"/>
<dbReference type="TAIR" id="AT1G66950">
    <property type="gene designation" value="ABCG39"/>
</dbReference>
<dbReference type="eggNOG" id="KOG0065">
    <property type="taxonomic scope" value="Eukaryota"/>
</dbReference>
<dbReference type="HOGENOM" id="CLU_000604_35_6_1"/>
<dbReference type="InParanoid" id="Q7PC84"/>
<dbReference type="OMA" id="MQRTIYE"/>
<dbReference type="PhylomeDB" id="Q7PC84"/>
<dbReference type="PRO" id="PR:Q7PC84"/>
<dbReference type="Proteomes" id="UP000006548">
    <property type="component" value="Chromosome 1"/>
</dbReference>
<dbReference type="ExpressionAtlas" id="Q7PC84">
    <property type="expression patterns" value="baseline and differential"/>
</dbReference>
<dbReference type="GO" id="GO:0005886">
    <property type="term" value="C:plasma membrane"/>
    <property type="evidence" value="ECO:0000314"/>
    <property type="project" value="TAIR"/>
</dbReference>
<dbReference type="GO" id="GO:0140359">
    <property type="term" value="F:ABC-type transporter activity"/>
    <property type="evidence" value="ECO:0007669"/>
    <property type="project" value="InterPro"/>
</dbReference>
<dbReference type="GO" id="GO:0005524">
    <property type="term" value="F:ATP binding"/>
    <property type="evidence" value="ECO:0007669"/>
    <property type="project" value="UniProtKB-KW"/>
</dbReference>
<dbReference type="GO" id="GO:0016887">
    <property type="term" value="F:ATP hydrolysis activity"/>
    <property type="evidence" value="ECO:0007669"/>
    <property type="project" value="InterPro"/>
</dbReference>
<dbReference type="GO" id="GO:0000302">
    <property type="term" value="P:response to reactive oxygen species"/>
    <property type="evidence" value="ECO:0000270"/>
    <property type="project" value="TAIR"/>
</dbReference>
<dbReference type="GO" id="GO:0042908">
    <property type="term" value="P:xenobiotic transport"/>
    <property type="evidence" value="ECO:0000315"/>
    <property type="project" value="TAIR"/>
</dbReference>
<dbReference type="CDD" id="cd03232">
    <property type="entry name" value="ABCG_PDR_domain2"/>
    <property type="match status" value="1"/>
</dbReference>
<dbReference type="FunFam" id="3.40.50.300:FF:000179">
    <property type="entry name" value="ABC transporter G family member 34"/>
    <property type="match status" value="1"/>
</dbReference>
<dbReference type="FunFam" id="3.40.50.300:FF:000059">
    <property type="entry name" value="ABC transporter G family member 40"/>
    <property type="match status" value="1"/>
</dbReference>
<dbReference type="Gene3D" id="3.40.50.300">
    <property type="entry name" value="P-loop containing nucleotide triphosphate hydrolases"/>
    <property type="match status" value="2"/>
</dbReference>
<dbReference type="InterPro" id="IPR003593">
    <property type="entry name" value="AAA+_ATPase"/>
</dbReference>
<dbReference type="InterPro" id="IPR013525">
    <property type="entry name" value="ABC2_TM"/>
</dbReference>
<dbReference type="InterPro" id="IPR029481">
    <property type="entry name" value="ABC_trans_N"/>
</dbReference>
<dbReference type="InterPro" id="IPR003439">
    <property type="entry name" value="ABC_transporter-like_ATP-bd"/>
</dbReference>
<dbReference type="InterPro" id="IPR043926">
    <property type="entry name" value="ABCG_dom"/>
</dbReference>
<dbReference type="InterPro" id="IPR034003">
    <property type="entry name" value="ABCG_PDR_2"/>
</dbReference>
<dbReference type="InterPro" id="IPR027417">
    <property type="entry name" value="P-loop_NTPase"/>
</dbReference>
<dbReference type="InterPro" id="IPR013581">
    <property type="entry name" value="PDR_assoc"/>
</dbReference>
<dbReference type="PANTHER" id="PTHR19241">
    <property type="entry name" value="ATP-BINDING CASSETTE TRANSPORTER"/>
    <property type="match status" value="1"/>
</dbReference>
<dbReference type="Pfam" id="PF01061">
    <property type="entry name" value="ABC2_membrane"/>
    <property type="match status" value="2"/>
</dbReference>
<dbReference type="Pfam" id="PF19055">
    <property type="entry name" value="ABC2_membrane_7"/>
    <property type="match status" value="2"/>
</dbReference>
<dbReference type="Pfam" id="PF00005">
    <property type="entry name" value="ABC_tran"/>
    <property type="match status" value="2"/>
</dbReference>
<dbReference type="Pfam" id="PF14510">
    <property type="entry name" value="ABC_trans_N"/>
    <property type="match status" value="1"/>
</dbReference>
<dbReference type="Pfam" id="PF08370">
    <property type="entry name" value="PDR_assoc"/>
    <property type="match status" value="1"/>
</dbReference>
<dbReference type="SMART" id="SM00382">
    <property type="entry name" value="AAA"/>
    <property type="match status" value="2"/>
</dbReference>
<dbReference type="SUPFAM" id="SSF52540">
    <property type="entry name" value="P-loop containing nucleoside triphosphate hydrolases"/>
    <property type="match status" value="2"/>
</dbReference>
<dbReference type="PROSITE" id="PS50893">
    <property type="entry name" value="ABC_TRANSPORTER_2"/>
    <property type="match status" value="2"/>
</dbReference>
<proteinExistence type="inferred from homology"/>
<protein>
    <recommendedName>
        <fullName>ABC transporter G family member 39</fullName>
        <shortName>ABC transporter ABCG.39</shortName>
        <shortName>AtABCG39</shortName>
    </recommendedName>
    <alternativeName>
        <fullName>Pleiotropic drug resistance protein 11</fullName>
    </alternativeName>
</protein>
<evidence type="ECO:0000250" key="1"/>
<evidence type="ECO:0000255" key="2"/>
<evidence type="ECO:0000255" key="3">
    <source>
        <dbReference type="PROSITE-ProRule" id="PRU00434"/>
    </source>
</evidence>
<evidence type="ECO:0000256" key="4">
    <source>
        <dbReference type="SAM" id="MobiDB-lite"/>
    </source>
</evidence>
<evidence type="ECO:0000305" key="5"/>